<reference key="1">
    <citation type="journal article" date="2007" name="Science">
        <title>Legumes symbioses: absence of nod genes in photosynthetic bradyrhizobia.</title>
        <authorList>
            <person name="Giraud E."/>
            <person name="Moulin L."/>
            <person name="Vallenet D."/>
            <person name="Barbe V."/>
            <person name="Cytryn E."/>
            <person name="Avarre J.-C."/>
            <person name="Jaubert M."/>
            <person name="Simon D."/>
            <person name="Cartieaux F."/>
            <person name="Prin Y."/>
            <person name="Bena G."/>
            <person name="Hannibal L."/>
            <person name="Fardoux J."/>
            <person name="Kojadinovic M."/>
            <person name="Vuillet L."/>
            <person name="Lajus A."/>
            <person name="Cruveiller S."/>
            <person name="Rouy Z."/>
            <person name="Mangenot S."/>
            <person name="Segurens B."/>
            <person name="Dossat C."/>
            <person name="Franck W.L."/>
            <person name="Chang W.-S."/>
            <person name="Saunders E."/>
            <person name="Bruce D."/>
            <person name="Richardson P."/>
            <person name="Normand P."/>
            <person name="Dreyfus B."/>
            <person name="Pignol D."/>
            <person name="Stacey G."/>
            <person name="Emerich D."/>
            <person name="Vermeglio A."/>
            <person name="Medigue C."/>
            <person name="Sadowsky M."/>
        </authorList>
    </citation>
    <scope>NUCLEOTIDE SEQUENCE [LARGE SCALE GENOMIC DNA]</scope>
    <source>
        <strain>BTAi1 / ATCC BAA-1182</strain>
    </source>
</reference>
<feature type="chain" id="PRO_0000305736" description="Small ribosomal subunit protein uS8">
    <location>
        <begin position="1"/>
        <end position="132"/>
    </location>
</feature>
<name>RS8_BRASB</name>
<comment type="function">
    <text evidence="1">One of the primary rRNA binding proteins, it binds directly to 16S rRNA central domain where it helps coordinate assembly of the platform of the 30S subunit.</text>
</comment>
<comment type="subunit">
    <text evidence="1">Part of the 30S ribosomal subunit. Contacts proteins S5 and S12.</text>
</comment>
<comment type="similarity">
    <text evidence="1">Belongs to the universal ribosomal protein uS8 family.</text>
</comment>
<dbReference type="EMBL" id="CP000494">
    <property type="protein sequence ID" value="ABQ37057.1"/>
    <property type="molecule type" value="Genomic_DNA"/>
</dbReference>
<dbReference type="RefSeq" id="WP_012045037.1">
    <property type="nucleotide sequence ID" value="NC_009485.1"/>
</dbReference>
<dbReference type="SMR" id="A5ELL3"/>
<dbReference type="STRING" id="288000.BBta_5056"/>
<dbReference type="KEGG" id="bbt:BBta_5056"/>
<dbReference type="eggNOG" id="COG0096">
    <property type="taxonomic scope" value="Bacteria"/>
</dbReference>
<dbReference type="HOGENOM" id="CLU_098428_0_0_5"/>
<dbReference type="OrthoDB" id="9802617at2"/>
<dbReference type="Proteomes" id="UP000000246">
    <property type="component" value="Chromosome"/>
</dbReference>
<dbReference type="GO" id="GO:1990904">
    <property type="term" value="C:ribonucleoprotein complex"/>
    <property type="evidence" value="ECO:0007669"/>
    <property type="project" value="UniProtKB-KW"/>
</dbReference>
<dbReference type="GO" id="GO:0005840">
    <property type="term" value="C:ribosome"/>
    <property type="evidence" value="ECO:0007669"/>
    <property type="project" value="UniProtKB-KW"/>
</dbReference>
<dbReference type="GO" id="GO:0019843">
    <property type="term" value="F:rRNA binding"/>
    <property type="evidence" value="ECO:0007669"/>
    <property type="project" value="UniProtKB-UniRule"/>
</dbReference>
<dbReference type="GO" id="GO:0003735">
    <property type="term" value="F:structural constituent of ribosome"/>
    <property type="evidence" value="ECO:0007669"/>
    <property type="project" value="InterPro"/>
</dbReference>
<dbReference type="GO" id="GO:0006412">
    <property type="term" value="P:translation"/>
    <property type="evidence" value="ECO:0007669"/>
    <property type="project" value="UniProtKB-UniRule"/>
</dbReference>
<dbReference type="FunFam" id="3.30.1370.30:FF:000002">
    <property type="entry name" value="30S ribosomal protein S8"/>
    <property type="match status" value="1"/>
</dbReference>
<dbReference type="FunFam" id="3.30.1490.10:FF:000001">
    <property type="entry name" value="30S ribosomal protein S8"/>
    <property type="match status" value="1"/>
</dbReference>
<dbReference type="Gene3D" id="3.30.1370.30">
    <property type="match status" value="1"/>
</dbReference>
<dbReference type="Gene3D" id="3.30.1490.10">
    <property type="match status" value="1"/>
</dbReference>
<dbReference type="HAMAP" id="MF_01302_B">
    <property type="entry name" value="Ribosomal_uS8_B"/>
    <property type="match status" value="1"/>
</dbReference>
<dbReference type="InterPro" id="IPR000630">
    <property type="entry name" value="Ribosomal_uS8"/>
</dbReference>
<dbReference type="InterPro" id="IPR047863">
    <property type="entry name" value="Ribosomal_uS8_CS"/>
</dbReference>
<dbReference type="InterPro" id="IPR035987">
    <property type="entry name" value="Ribosomal_uS8_sf"/>
</dbReference>
<dbReference type="NCBIfam" id="NF001109">
    <property type="entry name" value="PRK00136.1"/>
    <property type="match status" value="1"/>
</dbReference>
<dbReference type="PANTHER" id="PTHR11758">
    <property type="entry name" value="40S RIBOSOMAL PROTEIN S15A"/>
    <property type="match status" value="1"/>
</dbReference>
<dbReference type="Pfam" id="PF00410">
    <property type="entry name" value="Ribosomal_S8"/>
    <property type="match status" value="1"/>
</dbReference>
<dbReference type="SUPFAM" id="SSF56047">
    <property type="entry name" value="Ribosomal protein S8"/>
    <property type="match status" value="1"/>
</dbReference>
<dbReference type="PROSITE" id="PS00053">
    <property type="entry name" value="RIBOSOMAL_S8"/>
    <property type="match status" value="1"/>
</dbReference>
<sequence length="132" mass="14615">MSTHDPISDLITRIRNAQMRSKSKVTTPGSKMRASVLEVLKSEGYIRGYATLEHPSGRSEIEIELKYFDGEPVIREIERVSKPGRRVYTSVKNLPRVNNGLGISVLSTPKGIMADHSARDANVGGEVLFTVF</sequence>
<protein>
    <recommendedName>
        <fullName evidence="1">Small ribosomal subunit protein uS8</fullName>
    </recommendedName>
    <alternativeName>
        <fullName evidence="2">30S ribosomal protein S8</fullName>
    </alternativeName>
</protein>
<accession>A5ELL3</accession>
<proteinExistence type="inferred from homology"/>
<evidence type="ECO:0000255" key="1">
    <source>
        <dbReference type="HAMAP-Rule" id="MF_01302"/>
    </source>
</evidence>
<evidence type="ECO:0000305" key="2"/>
<gene>
    <name evidence="1" type="primary">rpsH</name>
    <name type="ordered locus">BBta_5056</name>
</gene>
<keyword id="KW-1185">Reference proteome</keyword>
<keyword id="KW-0687">Ribonucleoprotein</keyword>
<keyword id="KW-0689">Ribosomal protein</keyword>
<keyword id="KW-0694">RNA-binding</keyword>
<keyword id="KW-0699">rRNA-binding</keyword>
<organism>
    <name type="scientific">Bradyrhizobium sp. (strain BTAi1 / ATCC BAA-1182)</name>
    <dbReference type="NCBI Taxonomy" id="288000"/>
    <lineage>
        <taxon>Bacteria</taxon>
        <taxon>Pseudomonadati</taxon>
        <taxon>Pseudomonadota</taxon>
        <taxon>Alphaproteobacteria</taxon>
        <taxon>Hyphomicrobiales</taxon>
        <taxon>Nitrobacteraceae</taxon>
        <taxon>Bradyrhizobium</taxon>
    </lineage>
</organism>